<accession>Q9ET09</accession>
<accession>Q4FZY6</accession>
<accession>Q5XIW5</accession>
<accession>Q9ET07</accession>
<accession>Q9ET08</accession>
<feature type="transit peptide" description="Mitochondrion" evidence="2">
    <location>
        <begin position="1"/>
        <end position="28"/>
    </location>
</feature>
<feature type="chain" id="PRO_0000042841" description="Magnesium transporter MRS2 homolog, mitochondrial">
    <location>
        <begin position="29"/>
        <end position="434"/>
    </location>
</feature>
<feature type="topological domain" description="Mitochondrial matrix" evidence="1">
    <location>
        <begin position="54"/>
        <end position="330"/>
    </location>
</feature>
<feature type="transmembrane region" description="Helical; Name=1" evidence="1">
    <location>
        <begin position="331"/>
        <end position="350"/>
    </location>
</feature>
<feature type="topological domain" description="Mitochondrial intermembrane" evidence="1">
    <location>
        <begin position="351"/>
        <end position="361"/>
    </location>
</feature>
<feature type="transmembrane region" description="Helical; Name=2" evidence="1">
    <location>
        <begin position="362"/>
        <end position="392"/>
    </location>
</feature>
<feature type="topological domain" description="Mitochondrial matrix" evidence="1">
    <location>
        <begin position="393"/>
        <end position="434"/>
    </location>
</feature>
<feature type="short sequence motif" description="GMN motif" evidence="1">
    <location>
        <begin position="351"/>
        <end position="353"/>
    </location>
</feature>
<feature type="binding site" evidence="1">
    <location>
        <position position="234"/>
    </location>
    <ligand>
        <name>Mg(2+)</name>
        <dbReference type="ChEBI" id="CHEBI:18420"/>
        <label>1</label>
    </ligand>
</feature>
<feature type="binding site" evidence="1">
    <location>
        <position position="237"/>
    </location>
    <ligand>
        <name>Mg(2+)</name>
        <dbReference type="ChEBI" id="CHEBI:18420"/>
        <label>1</label>
    </ligand>
</feature>
<feature type="binding site" evidence="1">
    <location>
        <position position="238"/>
    </location>
    <ligand>
        <name>Mg(2+)</name>
        <dbReference type="ChEBI" id="CHEBI:18420"/>
        <label>1</label>
    </ligand>
</feature>
<feature type="binding site" evidence="1">
    <location>
        <position position="303"/>
    </location>
    <ligand>
        <name>Mg(2+)</name>
        <dbReference type="ChEBI" id="CHEBI:18420"/>
        <label>1</label>
    </ligand>
</feature>
<feature type="binding site" evidence="1">
    <location>
        <position position="320"/>
    </location>
    <ligand>
        <name>Mg(2+)</name>
        <dbReference type="ChEBI" id="CHEBI:18420"/>
        <label>2</label>
    </ligand>
</feature>
<feature type="binding site" evidence="1">
    <location>
        <position position="351"/>
    </location>
    <ligand>
        <name>Mg(2+)</name>
        <dbReference type="ChEBI" id="CHEBI:18420"/>
        <label>3d</label>
    </ligand>
</feature>
<feature type="binding site" evidence="1">
    <location>
        <position position="353"/>
    </location>
    <ligand>
        <name>Mg(2+)</name>
        <dbReference type="ChEBI" id="CHEBI:18420"/>
        <label>3d</label>
    </ligand>
</feature>
<feature type="splice variant" id="VSP_016211" description="In isoform 3." evidence="3">
    <original>INTLQGKLSILQP</original>
    <variation>AMLLSRSTPFRGN</variation>
    <location>
        <begin position="188"/>
        <end position="200"/>
    </location>
</feature>
<feature type="splice variant" id="VSP_016212" description="In isoform 3." evidence="3">
    <location>
        <begin position="201"/>
        <end position="434"/>
    </location>
</feature>
<feature type="splice variant" id="VSP_016213" description="In isoform 2." evidence="3">
    <original>MASLPKKTLLADRRMDVKNSLRPEGLGAGRTILASR</original>
    <variation>VWTWGSQQHCWALLILGIESGSLGFSGHRLCDPVQVLLPFPSANPVCTVCFK</variation>
    <location>
        <begin position="399"/>
        <end position="434"/>
    </location>
</feature>
<protein>
    <recommendedName>
        <fullName>Magnesium transporter MRS2 homolog, mitochondrial</fullName>
    </recommendedName>
    <alternativeName>
        <fullName>MRS2-like protein</fullName>
    </alternativeName>
</protein>
<sequence>MECLRYLPRLLPRAAQSRSALCMAAVRLSLAACCGRATPLTSGSQKAPSTPRTAGDVYRFRTSDASQATLASVAQVFAVTKFDKEGNVTSFERKKTELYHELALQARDLRFQHVMSITTRNNRIIMRMEYLKAVITPEYLLILDYRNLNLEHWLFRELPSQLAGEGQLVTYPLPFEFRAIEALLQYWINTLQGKLSILQPLILETLDALVDPKHSSVDRSKLHVLLQNGKSLSELETDIKIFKESILELLDEEEMLEELCLTKWSDPHVFEQSSTGIDHAEEMELLLENYYRLADDLSNEARELRVLIDDSQSIIFINLDSHRNVMMRLNLQLTMGTFSLSLFGLMGVAFGMNLESSLEEDHRVFWLITGIMFMGSGLIWRRLLSFLGRQLEAPLPPVMASLPKKTLLADRRMDVKNSLRPEGLGAGRTILASR</sequence>
<reference key="1">
    <citation type="submission" date="2000-07" db="EMBL/GenBank/DDBJ databases">
        <title>Putative mammalian magnesium transporters.</title>
        <authorList>
            <person name="Bosma T.J."/>
            <person name="Cooper G.S."/>
            <person name="Gardner R.C."/>
        </authorList>
    </citation>
    <scope>NUCLEOTIDE SEQUENCE [MRNA] (ISOFORM 1)</scope>
    <source>
        <tissue>Soleus muscle</tissue>
    </source>
</reference>
<reference key="2">
    <citation type="journal article" date="2004" name="Genome Res.">
        <title>The status, quality, and expansion of the NIH full-length cDNA project: the Mammalian Gene Collection (MGC).</title>
        <authorList>
            <consortium name="The MGC Project Team"/>
        </authorList>
    </citation>
    <scope>NUCLEOTIDE SEQUENCE [LARGE SCALE MRNA] (ISOFORMS 2 AND 3)</scope>
    <source>
        <tissue>Ovary</tissue>
        <tissue>Testis</tissue>
    </source>
</reference>
<keyword id="KW-0025">Alternative splicing</keyword>
<keyword id="KW-0406">Ion transport</keyword>
<keyword id="KW-0460">Magnesium</keyword>
<keyword id="KW-0472">Membrane</keyword>
<keyword id="KW-0479">Metal-binding</keyword>
<keyword id="KW-0496">Mitochondrion</keyword>
<keyword id="KW-0999">Mitochondrion inner membrane</keyword>
<keyword id="KW-1185">Reference proteome</keyword>
<keyword id="KW-0809">Transit peptide</keyword>
<keyword id="KW-0812">Transmembrane</keyword>
<keyword id="KW-1133">Transmembrane helix</keyword>
<keyword id="KW-0813">Transport</keyword>
<evidence type="ECO:0000250" key="1">
    <source>
        <dbReference type="UniProtKB" id="Q9HD23"/>
    </source>
</evidence>
<evidence type="ECO:0000255" key="2"/>
<evidence type="ECO:0000303" key="3">
    <source>
    </source>
</evidence>
<evidence type="ECO:0000305" key="4"/>
<name>MRS2_RAT</name>
<proteinExistence type="evidence at transcript level"/>
<comment type="function">
    <text evidence="1">Magnesium transporter that mediates the influx of magnesium into the mitochondrial matrix and regulates magnesium metabolism (By similarity). Also permeable to calcium, sodium and potassium ions (By similarity). Required for normal expression of the mitochondrial respiratory complex I subunits (By similarity). May play a role in maintaining the inner mitochondrial membrane potential (By similarity).</text>
</comment>
<comment type="activity regulation">
    <text evidence="1">May be regulated by calcium ions.</text>
</comment>
<comment type="subunit">
    <text evidence="1">Homopentamer.</text>
</comment>
<comment type="subcellular location">
    <subcellularLocation>
        <location evidence="1">Mitochondrion inner membrane</location>
        <topology evidence="1">Multi-pass membrane protein</topology>
    </subcellularLocation>
</comment>
<comment type="alternative products">
    <event type="alternative splicing"/>
    <isoform>
        <id>Q9ET09-1</id>
        <name>1</name>
        <sequence type="displayed"/>
    </isoform>
    <isoform>
        <id>Q9ET09-2</id>
        <name>2</name>
        <sequence type="described" ref="VSP_016213"/>
    </isoform>
    <isoform>
        <id>Q9ET09-3</id>
        <name>3</name>
        <sequence type="described" ref="VSP_016211 VSP_016212"/>
    </isoform>
</comment>
<comment type="domain">
    <text evidence="1">The GMN motif acts as an ion selectivity filter.</text>
</comment>
<comment type="similarity">
    <text evidence="4">Belongs to the CorA metal ion transporter (MIT) (TC 1.A.35) family.</text>
</comment>
<comment type="sequence caution" evidence="4">
    <conflict type="erroneous initiation">
        <sequence resource="EMBL-CDS" id="AAH98916"/>
    </conflict>
</comment>
<organism>
    <name type="scientific">Rattus norvegicus</name>
    <name type="common">Rat</name>
    <dbReference type="NCBI Taxonomy" id="10116"/>
    <lineage>
        <taxon>Eukaryota</taxon>
        <taxon>Metazoa</taxon>
        <taxon>Chordata</taxon>
        <taxon>Craniata</taxon>
        <taxon>Vertebrata</taxon>
        <taxon>Euteleostomi</taxon>
        <taxon>Mammalia</taxon>
        <taxon>Eutheria</taxon>
        <taxon>Euarchontoglires</taxon>
        <taxon>Glires</taxon>
        <taxon>Rodentia</taxon>
        <taxon>Myomorpha</taxon>
        <taxon>Muroidea</taxon>
        <taxon>Muridae</taxon>
        <taxon>Murinae</taxon>
        <taxon>Rattus</taxon>
    </lineage>
</organism>
<dbReference type="EMBL" id="AF288289">
    <property type="protein sequence ID" value="AAF99081.1"/>
    <property type="molecule type" value="mRNA"/>
</dbReference>
<dbReference type="EMBL" id="AF288290">
    <property type="protein sequence ID" value="AAF99082.1"/>
    <property type="molecule type" value="mRNA"/>
</dbReference>
<dbReference type="EMBL" id="AF288291">
    <property type="protein sequence ID" value="AAF99083.1"/>
    <property type="molecule type" value="mRNA"/>
</dbReference>
<dbReference type="EMBL" id="BC083554">
    <property type="protein sequence ID" value="AAH83554.1"/>
    <property type="molecule type" value="mRNA"/>
</dbReference>
<dbReference type="EMBL" id="BC098916">
    <property type="protein sequence ID" value="AAH98916.1"/>
    <property type="status" value="ALT_INIT"/>
    <property type="molecule type" value="mRNA"/>
</dbReference>
<dbReference type="RefSeq" id="NP_076491.1">
    <molecule id="Q9ET09-1"/>
    <property type="nucleotide sequence ID" value="NM_024001.1"/>
</dbReference>
<dbReference type="RefSeq" id="XP_006253999.1">
    <molecule id="Q9ET09-2"/>
    <property type="nucleotide sequence ID" value="XM_006253937.5"/>
</dbReference>
<dbReference type="SMR" id="Q9ET09"/>
<dbReference type="FunCoup" id="Q9ET09">
    <property type="interactions" value="1600"/>
</dbReference>
<dbReference type="STRING" id="10116.ENSRNOP00000023787"/>
<dbReference type="PhosphoSitePlus" id="Q9ET09"/>
<dbReference type="PaxDb" id="10116-ENSRNOP00000023787"/>
<dbReference type="Ensembl" id="ENSRNOT00000023787.6">
    <molecule id="Q9ET09-1"/>
    <property type="protein sequence ID" value="ENSRNOP00000023787.5"/>
    <property type="gene ID" value="ENSRNOG00000017545.7"/>
</dbReference>
<dbReference type="Ensembl" id="ENSRNOT00000110477.1">
    <molecule id="Q9ET09-2"/>
    <property type="protein sequence ID" value="ENSRNOP00000083733.1"/>
    <property type="gene ID" value="ENSRNOG00000017545.7"/>
</dbReference>
<dbReference type="GeneID" id="79032"/>
<dbReference type="KEGG" id="rno:79032"/>
<dbReference type="UCSC" id="RGD:708529">
    <molecule id="Q9ET09-1"/>
    <property type="organism name" value="rat"/>
</dbReference>
<dbReference type="AGR" id="RGD:708529"/>
<dbReference type="CTD" id="57380"/>
<dbReference type="RGD" id="708529">
    <property type="gene designation" value="Mrs2"/>
</dbReference>
<dbReference type="eggNOG" id="KOG2662">
    <property type="taxonomic scope" value="Eukaryota"/>
</dbReference>
<dbReference type="GeneTree" id="ENSGT00390000009988"/>
<dbReference type="HOGENOM" id="CLU_047261_0_0_1"/>
<dbReference type="InParanoid" id="Q9ET09"/>
<dbReference type="OMA" id="TRNNCII"/>
<dbReference type="OrthoDB" id="43942at9989"/>
<dbReference type="PhylomeDB" id="Q9ET09"/>
<dbReference type="Reactome" id="R-RNO-5223345">
    <property type="pathway name" value="Miscellaneous transport and binding events"/>
</dbReference>
<dbReference type="PRO" id="PR:Q9ET09"/>
<dbReference type="Proteomes" id="UP000002494">
    <property type="component" value="Chromosome 17"/>
</dbReference>
<dbReference type="Bgee" id="ENSRNOG00000017545">
    <property type="expression patterns" value="Expressed in duodenum and 20 other cell types or tissues"/>
</dbReference>
<dbReference type="GO" id="GO:0005743">
    <property type="term" value="C:mitochondrial inner membrane"/>
    <property type="evidence" value="ECO:0000314"/>
    <property type="project" value="RGD"/>
</dbReference>
<dbReference type="GO" id="GO:0005739">
    <property type="term" value="C:mitochondrion"/>
    <property type="evidence" value="ECO:0000250"/>
    <property type="project" value="UniProtKB"/>
</dbReference>
<dbReference type="GO" id="GO:0015095">
    <property type="term" value="F:magnesium ion transmembrane transporter activity"/>
    <property type="evidence" value="ECO:0000250"/>
    <property type="project" value="UniProtKB"/>
</dbReference>
<dbReference type="GO" id="GO:0006089">
    <property type="term" value="P:lactate metabolic process"/>
    <property type="evidence" value="ECO:0000315"/>
    <property type="project" value="RGD"/>
</dbReference>
<dbReference type="GO" id="GO:0045016">
    <property type="term" value="P:mitochondrial magnesium ion transmembrane transport"/>
    <property type="evidence" value="ECO:0000250"/>
    <property type="project" value="UniProtKB"/>
</dbReference>
<dbReference type="CDD" id="cd12823">
    <property type="entry name" value="Mrs2_Mfm1p-like"/>
    <property type="match status" value="1"/>
</dbReference>
<dbReference type="FunFam" id="1.20.58.340:FF:000007">
    <property type="entry name" value="Magnesium transporter MRS2 homolog, mitochondrial"/>
    <property type="match status" value="1"/>
</dbReference>
<dbReference type="FunFam" id="2.40.128.330:FF:000003">
    <property type="entry name" value="Magnesium transporter MRS2 homolog, mitochondrial"/>
    <property type="match status" value="1"/>
</dbReference>
<dbReference type="Gene3D" id="2.40.128.330">
    <property type="match status" value="1"/>
</dbReference>
<dbReference type="Gene3D" id="1.20.58.340">
    <property type="entry name" value="Magnesium transport protein CorA, transmembrane region"/>
    <property type="match status" value="1"/>
</dbReference>
<dbReference type="InterPro" id="IPR039204">
    <property type="entry name" value="MRS2-like"/>
</dbReference>
<dbReference type="PANTHER" id="PTHR13890:SF0">
    <property type="entry name" value="MAGNESIUM TRANSPORTER MRS2 HOMOLOG, MITOCHONDRIAL"/>
    <property type="match status" value="1"/>
</dbReference>
<dbReference type="PANTHER" id="PTHR13890">
    <property type="entry name" value="RNA SPLICING PROTEIN MRS2, MITOCHONDRIAL"/>
    <property type="match status" value="1"/>
</dbReference>
<dbReference type="Pfam" id="PF22099">
    <property type="entry name" value="MRS2-like"/>
    <property type="match status" value="1"/>
</dbReference>
<gene>
    <name type="primary">Mrs2</name>
    <name type="synonym">Mrs2l</name>
    <name type="synonym">Rpt</name>
</gene>